<protein>
    <recommendedName>
        <fullName evidence="1">dCTP deaminase</fullName>
        <ecNumber evidence="1">3.5.4.13</ecNumber>
    </recommendedName>
    <alternativeName>
        <fullName evidence="1">Deoxycytidine triphosphate deaminase</fullName>
    </alternativeName>
</protein>
<evidence type="ECO:0000255" key="1">
    <source>
        <dbReference type="HAMAP-Rule" id="MF_00146"/>
    </source>
</evidence>
<accession>A0RR66</accession>
<organism>
    <name type="scientific">Campylobacter fetus subsp. fetus (strain 82-40)</name>
    <dbReference type="NCBI Taxonomy" id="360106"/>
    <lineage>
        <taxon>Bacteria</taxon>
        <taxon>Pseudomonadati</taxon>
        <taxon>Campylobacterota</taxon>
        <taxon>Epsilonproteobacteria</taxon>
        <taxon>Campylobacterales</taxon>
        <taxon>Campylobacteraceae</taxon>
        <taxon>Campylobacter</taxon>
    </lineage>
</organism>
<proteinExistence type="inferred from homology"/>
<name>DCD_CAMFF</name>
<gene>
    <name evidence="1" type="primary">dcd</name>
    <name type="ordered locus">CFF8240_1566</name>
</gene>
<sequence>MGLKSDKWIREQSIENQMIEPFCEENIGKGVVSYGLSSYGYDIRVGCEFKIFTNIGGTVVDPKNFDEKNVVDFIGDICIVPPNSFALARTVEYFKMPHDVLAICLGKSTYARCGIIVNVTPFEPGFNGHITIEISNTTPLPAKIYANEGIAQVLFLQGDEPCETSYADKKGKYQDQEGITLPRILK</sequence>
<reference key="1">
    <citation type="submission" date="2006-11" db="EMBL/GenBank/DDBJ databases">
        <title>Sequence of Campylobacter fetus subsp. fetus 82-40.</title>
        <authorList>
            <person name="Fouts D.E."/>
            <person name="Nelson K.E."/>
        </authorList>
    </citation>
    <scope>NUCLEOTIDE SEQUENCE [LARGE SCALE GENOMIC DNA]</scope>
    <source>
        <strain>82-40</strain>
    </source>
</reference>
<dbReference type="EC" id="3.5.4.13" evidence="1"/>
<dbReference type="EMBL" id="CP000487">
    <property type="protein sequence ID" value="ABK82585.1"/>
    <property type="molecule type" value="Genomic_DNA"/>
</dbReference>
<dbReference type="RefSeq" id="WP_002850597.1">
    <property type="nucleotide sequence ID" value="NC_008599.1"/>
</dbReference>
<dbReference type="SMR" id="A0RR66"/>
<dbReference type="GeneID" id="61065383"/>
<dbReference type="KEGG" id="cff:CFF8240_1566"/>
<dbReference type="eggNOG" id="COG0717">
    <property type="taxonomic scope" value="Bacteria"/>
</dbReference>
<dbReference type="HOGENOM" id="CLU_087476_4_0_7"/>
<dbReference type="UniPathway" id="UPA00610">
    <property type="reaction ID" value="UER00665"/>
</dbReference>
<dbReference type="Proteomes" id="UP000000760">
    <property type="component" value="Chromosome"/>
</dbReference>
<dbReference type="GO" id="GO:0008829">
    <property type="term" value="F:dCTP deaminase activity"/>
    <property type="evidence" value="ECO:0007669"/>
    <property type="project" value="UniProtKB-UniRule"/>
</dbReference>
<dbReference type="GO" id="GO:0000166">
    <property type="term" value="F:nucleotide binding"/>
    <property type="evidence" value="ECO:0007669"/>
    <property type="project" value="UniProtKB-KW"/>
</dbReference>
<dbReference type="GO" id="GO:0006226">
    <property type="term" value="P:dUMP biosynthetic process"/>
    <property type="evidence" value="ECO:0007669"/>
    <property type="project" value="UniProtKB-UniPathway"/>
</dbReference>
<dbReference type="GO" id="GO:0006229">
    <property type="term" value="P:dUTP biosynthetic process"/>
    <property type="evidence" value="ECO:0007669"/>
    <property type="project" value="UniProtKB-UniRule"/>
</dbReference>
<dbReference type="GO" id="GO:0015949">
    <property type="term" value="P:nucleobase-containing small molecule interconversion"/>
    <property type="evidence" value="ECO:0007669"/>
    <property type="project" value="TreeGrafter"/>
</dbReference>
<dbReference type="CDD" id="cd07557">
    <property type="entry name" value="trimeric_dUTPase"/>
    <property type="match status" value="1"/>
</dbReference>
<dbReference type="FunFam" id="2.70.40.10:FF:000006">
    <property type="entry name" value="dCTP deaminase"/>
    <property type="match status" value="1"/>
</dbReference>
<dbReference type="Gene3D" id="2.70.40.10">
    <property type="match status" value="1"/>
</dbReference>
<dbReference type="HAMAP" id="MF_00146">
    <property type="entry name" value="dCTP_deaminase"/>
    <property type="match status" value="1"/>
</dbReference>
<dbReference type="InterPro" id="IPR011962">
    <property type="entry name" value="dCTP_deaminase"/>
</dbReference>
<dbReference type="InterPro" id="IPR036157">
    <property type="entry name" value="dUTPase-like_sf"/>
</dbReference>
<dbReference type="InterPro" id="IPR033704">
    <property type="entry name" value="dUTPase_trimeric"/>
</dbReference>
<dbReference type="NCBIfam" id="TIGR02274">
    <property type="entry name" value="dCTP_deam"/>
    <property type="match status" value="1"/>
</dbReference>
<dbReference type="PANTHER" id="PTHR42680">
    <property type="entry name" value="DCTP DEAMINASE"/>
    <property type="match status" value="1"/>
</dbReference>
<dbReference type="PANTHER" id="PTHR42680:SF3">
    <property type="entry name" value="DCTP DEAMINASE"/>
    <property type="match status" value="1"/>
</dbReference>
<dbReference type="Pfam" id="PF22769">
    <property type="entry name" value="DCD"/>
    <property type="match status" value="1"/>
</dbReference>
<dbReference type="SUPFAM" id="SSF51283">
    <property type="entry name" value="dUTPase-like"/>
    <property type="match status" value="1"/>
</dbReference>
<comment type="function">
    <text evidence="1">Catalyzes the deamination of dCTP to dUTP.</text>
</comment>
<comment type="catalytic activity">
    <reaction evidence="1">
        <text>dCTP + H2O + H(+) = dUTP + NH4(+)</text>
        <dbReference type="Rhea" id="RHEA:22680"/>
        <dbReference type="ChEBI" id="CHEBI:15377"/>
        <dbReference type="ChEBI" id="CHEBI:15378"/>
        <dbReference type="ChEBI" id="CHEBI:28938"/>
        <dbReference type="ChEBI" id="CHEBI:61481"/>
        <dbReference type="ChEBI" id="CHEBI:61555"/>
        <dbReference type="EC" id="3.5.4.13"/>
    </reaction>
</comment>
<comment type="pathway">
    <text evidence="1">Pyrimidine metabolism; dUMP biosynthesis; dUMP from dCTP (dUTP route): step 1/2.</text>
</comment>
<comment type="subunit">
    <text evidence="1">Homotrimer.</text>
</comment>
<comment type="similarity">
    <text evidence="1">Belongs to the dCTP deaminase family.</text>
</comment>
<keyword id="KW-0378">Hydrolase</keyword>
<keyword id="KW-0546">Nucleotide metabolism</keyword>
<keyword id="KW-0547">Nucleotide-binding</keyword>
<feature type="chain" id="PRO_1000009700" description="dCTP deaminase">
    <location>
        <begin position="1"/>
        <end position="186"/>
    </location>
</feature>
<feature type="active site" description="Proton donor/acceptor" evidence="1">
    <location>
        <position position="133"/>
    </location>
</feature>
<feature type="binding site" evidence="1">
    <location>
        <begin position="107"/>
        <end position="112"/>
    </location>
    <ligand>
        <name>dCTP</name>
        <dbReference type="ChEBI" id="CHEBI:61481"/>
    </ligand>
</feature>
<feature type="binding site" evidence="1">
    <location>
        <position position="152"/>
    </location>
    <ligand>
        <name>dCTP</name>
        <dbReference type="ChEBI" id="CHEBI:61481"/>
    </ligand>
</feature>
<feature type="binding site" evidence="1">
    <location>
        <position position="166"/>
    </location>
    <ligand>
        <name>dCTP</name>
        <dbReference type="ChEBI" id="CHEBI:61481"/>
    </ligand>
</feature>
<feature type="binding site" evidence="1">
    <location>
        <position position="176"/>
    </location>
    <ligand>
        <name>dCTP</name>
        <dbReference type="ChEBI" id="CHEBI:61481"/>
    </ligand>
</feature>